<reference key="1">
    <citation type="journal article" date="2009" name="Nature">
        <title>Evolution of pathogenicity and sexual reproduction in eight Candida genomes.</title>
        <authorList>
            <person name="Butler G."/>
            <person name="Rasmussen M.D."/>
            <person name="Lin M.F."/>
            <person name="Santos M.A.S."/>
            <person name="Sakthikumar S."/>
            <person name="Munro C.A."/>
            <person name="Rheinbay E."/>
            <person name="Grabherr M."/>
            <person name="Forche A."/>
            <person name="Reedy J.L."/>
            <person name="Agrafioti I."/>
            <person name="Arnaud M.B."/>
            <person name="Bates S."/>
            <person name="Brown A.J.P."/>
            <person name="Brunke S."/>
            <person name="Costanzo M.C."/>
            <person name="Fitzpatrick D.A."/>
            <person name="de Groot P.W.J."/>
            <person name="Harris D."/>
            <person name="Hoyer L.L."/>
            <person name="Hube B."/>
            <person name="Klis F.M."/>
            <person name="Kodira C."/>
            <person name="Lennard N."/>
            <person name="Logue M.E."/>
            <person name="Martin R."/>
            <person name="Neiman A.M."/>
            <person name="Nikolaou E."/>
            <person name="Quail M.A."/>
            <person name="Quinn J."/>
            <person name="Santos M.C."/>
            <person name="Schmitzberger F.F."/>
            <person name="Sherlock G."/>
            <person name="Shah P."/>
            <person name="Silverstein K.A.T."/>
            <person name="Skrzypek M.S."/>
            <person name="Soll D."/>
            <person name="Staggs R."/>
            <person name="Stansfield I."/>
            <person name="Stumpf M.P.H."/>
            <person name="Sudbery P.E."/>
            <person name="Srikantha T."/>
            <person name="Zeng Q."/>
            <person name="Berman J."/>
            <person name="Berriman M."/>
            <person name="Heitman J."/>
            <person name="Gow N.A.R."/>
            <person name="Lorenz M.C."/>
            <person name="Birren B.W."/>
            <person name="Kellis M."/>
            <person name="Cuomo C.A."/>
        </authorList>
    </citation>
    <scope>NUCLEOTIDE SEQUENCE [LARGE SCALE GENOMIC DNA]</scope>
    <source>
        <strain>ATCC 6260 / CBS 566 / DSM 6381 / JCM 1539 / NBRC 10279 / NRRL Y-324</strain>
    </source>
</reference>
<protein>
    <recommendedName>
        <fullName evidence="1">RNA-binding protein RMD9, mitochondrial</fullName>
    </recommendedName>
</protein>
<name>RMD9_PICGU</name>
<keyword id="KW-0472">Membrane</keyword>
<keyword id="KW-0496">Mitochondrion</keyword>
<keyword id="KW-0999">Mitochondrion inner membrane</keyword>
<keyword id="KW-0597">Phosphoprotein</keyword>
<keyword id="KW-1185">Reference proteome</keyword>
<keyword id="KW-0749">Sporulation</keyword>
<keyword id="KW-0809">Transit peptide</keyword>
<gene>
    <name type="primary">RMD9</name>
    <name type="ORF">PGUG_01303</name>
</gene>
<accession>A5DDF2</accession>
<proteinExistence type="inferred from homology"/>
<feature type="transit peptide" description="Mitochondrion" evidence="2">
    <location>
        <begin position="1"/>
        <end position="23"/>
    </location>
</feature>
<feature type="chain" id="PRO_0000301787" description="RNA-binding protein RMD9, mitochondrial">
    <location>
        <begin position="24"/>
        <end position="632"/>
    </location>
</feature>
<feature type="region of interest" description="Disordered" evidence="3">
    <location>
        <begin position="27"/>
        <end position="69"/>
    </location>
</feature>
<feature type="compositionally biased region" description="Low complexity" evidence="3">
    <location>
        <begin position="34"/>
        <end position="52"/>
    </location>
</feature>
<feature type="compositionally biased region" description="Polar residues" evidence="3">
    <location>
        <begin position="53"/>
        <end position="69"/>
    </location>
</feature>
<evidence type="ECO:0000250" key="1">
    <source>
        <dbReference type="UniProtKB" id="P53140"/>
    </source>
</evidence>
<evidence type="ECO:0000255" key="2"/>
<evidence type="ECO:0000256" key="3">
    <source>
        <dbReference type="SAM" id="MobiDB-lite"/>
    </source>
</evidence>
<evidence type="ECO:0000305" key="4"/>
<organism>
    <name type="scientific">Meyerozyma guilliermondii (strain ATCC 6260 / CBS 566 / DSM 6381 / JCM 1539 / NBRC 10279 / NRRL Y-324)</name>
    <name type="common">Yeast</name>
    <name type="synonym">Candida guilliermondii</name>
    <dbReference type="NCBI Taxonomy" id="294746"/>
    <lineage>
        <taxon>Eukaryota</taxon>
        <taxon>Fungi</taxon>
        <taxon>Dikarya</taxon>
        <taxon>Ascomycota</taxon>
        <taxon>Saccharomycotina</taxon>
        <taxon>Pichiomycetes</taxon>
        <taxon>Debaryomycetaceae</taxon>
        <taxon>Meyerozyma</taxon>
    </lineage>
</organism>
<sequence length="632" mass="73046">MFRLLASSGQVSLRPVLLQHVRNNKHGLGFPNASGVPQSPSSMTSSSIVSPSQFTRSNSSAAGLSESPASSVDSKIENFLSKSAKDPLVREALDAETKNKLNYFKEQIDLAHRYRSIHDHDSERAFASTLDNLSRALEDESLRDTFVSRDLFSYAQVLNSGVYNNRTNRLSGAKNRDSDQYQNQNLHDEVLLKQAVLHLGELITNGEFKAILNAPTLSFLFYSMKQFQLYPEMIHLWENGVNDQQTGQVYLDEKILAVILPVTFEQNRFTYEEILHIYELNTEKLDKVGHELLTSMGKIAIAAGDYSRGLDSLESILQLYEKAQQSHYKNKILASLSDLHLSFIGTCKDIKISKHFFDKVVHYDLPYRVKLKVPHIQSLLENCYEQNEPMDNILYFWRASIAHYNTEQQLVLNSRYAILNNALFTIFFKKYPELNEESFSKLREIIAMYAESKPIDEVFLNTIIGNYSWDSKEVLEQIIENYDVYNVKRTPVSYRVCLKKTGSLESYSNEEILQKWNASLKHLDENKFTYIPVADWAALRDATILSHFKDARKEFYLSVLDKYKDYIQDHRSCIRFVRYWIKRKDVAADIARVASPEPQTFDCDIEIQVPQFRHLRKNINYVKEVQNMRFSG</sequence>
<dbReference type="EMBL" id="CH408156">
    <property type="protein sequence ID" value="EDK37205.2"/>
    <property type="molecule type" value="Genomic_DNA"/>
</dbReference>
<dbReference type="RefSeq" id="XP_001485632.1">
    <property type="nucleotide sequence ID" value="XM_001485582.1"/>
</dbReference>
<dbReference type="SMR" id="A5DDF2"/>
<dbReference type="FunCoup" id="A5DDF2">
    <property type="interactions" value="65"/>
</dbReference>
<dbReference type="STRING" id="294746.A5DDF2"/>
<dbReference type="GeneID" id="5127669"/>
<dbReference type="KEGG" id="pgu:PGUG_01303"/>
<dbReference type="VEuPathDB" id="FungiDB:PGUG_01303"/>
<dbReference type="eggNOG" id="ENOG502QUSW">
    <property type="taxonomic scope" value="Eukaryota"/>
</dbReference>
<dbReference type="HOGENOM" id="CLU_019840_1_0_1"/>
<dbReference type="InParanoid" id="A5DDF2"/>
<dbReference type="OMA" id="WENGVND"/>
<dbReference type="OrthoDB" id="4081443at2759"/>
<dbReference type="Proteomes" id="UP000001997">
    <property type="component" value="Unassembled WGS sequence"/>
</dbReference>
<dbReference type="GO" id="GO:0005743">
    <property type="term" value="C:mitochondrial inner membrane"/>
    <property type="evidence" value="ECO:0007669"/>
    <property type="project" value="UniProtKB-SubCell"/>
</dbReference>
<dbReference type="GO" id="GO:0030435">
    <property type="term" value="P:sporulation resulting in formation of a cellular spore"/>
    <property type="evidence" value="ECO:0007669"/>
    <property type="project" value="UniProtKB-KW"/>
</dbReference>
<comment type="function">
    <text evidence="1">Binds the 3'-UTR of mitochondrial mRNAs. Involved in the processing or stability of mitochondrial mRNAs.</text>
</comment>
<comment type="subunit">
    <text evidence="1">Monomer.</text>
</comment>
<comment type="subcellular location">
    <subcellularLocation>
        <location evidence="1">Mitochondrion inner membrane</location>
        <topology evidence="1">Peripheral membrane protein</topology>
        <orientation evidence="1">Matrix side</orientation>
    </subcellularLocation>
</comment>
<comment type="PTM">
    <text evidence="1">Phosphorylated. Phosphorylation promotes binding to RNA.</text>
</comment>
<comment type="similarity">
    <text evidence="4">Belongs to the RMD9 family.</text>
</comment>